<reference evidence="10 13" key="1">
    <citation type="submission" date="2002-08" db="EMBL/GenBank/DDBJ databases">
        <title>Functional characterization of the novel SR-related CTD associated factor, SCAF6.</title>
        <authorList>
            <person name="Sampson N.D."/>
            <person name="Hewitt J.E."/>
        </authorList>
    </citation>
    <scope>NUCLEOTIDE SEQUENCE [MRNA]</scope>
    <scope>VARIANT HIS-199</scope>
</reference>
<reference key="2">
    <citation type="journal article" date="2004" name="Nature">
        <title>The DNA sequence and biology of human chromosome 19.</title>
        <authorList>
            <person name="Grimwood J."/>
            <person name="Gordon L.A."/>
            <person name="Olsen A.S."/>
            <person name="Terry A."/>
            <person name="Schmutz J."/>
            <person name="Lamerdin J.E."/>
            <person name="Hellsten U."/>
            <person name="Goodstein D."/>
            <person name="Couronne O."/>
            <person name="Tran-Gyamfi M."/>
            <person name="Aerts A."/>
            <person name="Altherr M."/>
            <person name="Ashworth L."/>
            <person name="Bajorek E."/>
            <person name="Black S."/>
            <person name="Branscomb E."/>
            <person name="Caenepeel S."/>
            <person name="Carrano A.V."/>
            <person name="Caoile C."/>
            <person name="Chan Y.M."/>
            <person name="Christensen M."/>
            <person name="Cleland C.A."/>
            <person name="Copeland A."/>
            <person name="Dalin E."/>
            <person name="Dehal P."/>
            <person name="Denys M."/>
            <person name="Detter J.C."/>
            <person name="Escobar J."/>
            <person name="Flowers D."/>
            <person name="Fotopulos D."/>
            <person name="Garcia C."/>
            <person name="Georgescu A.M."/>
            <person name="Glavina T."/>
            <person name="Gomez M."/>
            <person name="Gonzales E."/>
            <person name="Groza M."/>
            <person name="Hammon N."/>
            <person name="Hawkins T."/>
            <person name="Haydu L."/>
            <person name="Ho I."/>
            <person name="Huang W."/>
            <person name="Israni S."/>
            <person name="Jett J."/>
            <person name="Kadner K."/>
            <person name="Kimball H."/>
            <person name="Kobayashi A."/>
            <person name="Larionov V."/>
            <person name="Leem S.-H."/>
            <person name="Lopez F."/>
            <person name="Lou Y."/>
            <person name="Lowry S."/>
            <person name="Malfatti S."/>
            <person name="Martinez D."/>
            <person name="McCready P.M."/>
            <person name="Medina C."/>
            <person name="Morgan J."/>
            <person name="Nelson K."/>
            <person name="Nolan M."/>
            <person name="Ovcharenko I."/>
            <person name="Pitluck S."/>
            <person name="Pollard M."/>
            <person name="Popkie A.P."/>
            <person name="Predki P."/>
            <person name="Quan G."/>
            <person name="Ramirez L."/>
            <person name="Rash S."/>
            <person name="Retterer J."/>
            <person name="Rodriguez A."/>
            <person name="Rogers S."/>
            <person name="Salamov A."/>
            <person name="Salazar A."/>
            <person name="She X."/>
            <person name="Smith D."/>
            <person name="Slezak T."/>
            <person name="Solovyev V."/>
            <person name="Thayer N."/>
            <person name="Tice H."/>
            <person name="Tsai M."/>
            <person name="Ustaszewska A."/>
            <person name="Vo N."/>
            <person name="Wagner M."/>
            <person name="Wheeler J."/>
            <person name="Wu K."/>
            <person name="Xie G."/>
            <person name="Yang J."/>
            <person name="Dubchak I."/>
            <person name="Furey T.S."/>
            <person name="DeJong P."/>
            <person name="Dickson M."/>
            <person name="Gordon D."/>
            <person name="Eichler E.E."/>
            <person name="Pennacchio L.A."/>
            <person name="Richardson P."/>
            <person name="Stubbs L."/>
            <person name="Rokhsar D.S."/>
            <person name="Myers R.M."/>
            <person name="Rubin E.M."/>
            <person name="Lucas S.M."/>
        </authorList>
    </citation>
    <scope>NUCLEOTIDE SEQUENCE [LARGE SCALE GENOMIC DNA]</scope>
</reference>
<reference evidence="10 12" key="3">
    <citation type="journal article" date="2004" name="Genome Res.">
        <title>The status, quality, and expansion of the NIH full-length cDNA project: the Mammalian Gene Collection (MGC).</title>
        <authorList>
            <consortium name="The MGC Project Team"/>
        </authorList>
    </citation>
    <scope>NUCLEOTIDE SEQUENCE [LARGE SCALE MRNA]</scope>
    <source>
        <tissue evidence="12">Uterus</tissue>
    </source>
</reference>
<reference evidence="10 14" key="4">
    <citation type="journal article" date="1996" name="Nat. Genet.">
        <title>Cloning of the gene for spinocerebellar ataxia 2 reveals a locus with high sensitivity to expanded CAG/glutamine repeats.</title>
        <authorList>
            <person name="Imbert G."/>
            <person name="Saudou F."/>
            <person name="Yvert G."/>
            <person name="Devys D."/>
            <person name="Trottier Y."/>
            <person name="Garnier J.-M."/>
            <person name="Weber C."/>
            <person name="Mandel J.-L."/>
            <person name="Cancel G."/>
            <person name="Abbas N."/>
            <person name="Duerr A."/>
            <person name="Didierjean O."/>
            <person name="Stevanin G."/>
            <person name="Agid Y."/>
            <person name="Brice A."/>
        </authorList>
    </citation>
    <scope>NUCLEOTIDE SEQUENCE [MRNA] OF 1-607</scope>
    <source>
        <tissue evidence="14">Lymphoblast</tissue>
    </source>
</reference>
<reference evidence="10 11" key="5">
    <citation type="journal article" date="2000" name="Biochem. J.">
        <title>Cloning of human Ca2+ homoeostasis endoplasmic reticulum protein (CHERP): regulated expression of antisense cDNA depletes CHERP, inhibits intracellular Ca2+ mobilization and decreases cell proliferation.</title>
        <authorList>
            <person name="LaPlante J.M."/>
            <person name="O'Rourke F."/>
            <person name="Lu X."/>
            <person name="Fein A."/>
            <person name="Olsen A."/>
            <person name="Feinstein M.B."/>
        </authorList>
    </citation>
    <scope>NUCLEOTIDE SEQUENCE [MRNA] OF 9-916</scope>
    <scope>FUNCTION</scope>
    <scope>SUBCELLULAR LOCATION</scope>
    <scope>TISSUE SPECIFICITY</scope>
    <scope>VARIANT HIS-199</scope>
</reference>
<reference evidence="10" key="6">
    <citation type="journal article" date="1994" name="Biochem. J.">
        <title>Ca2+ release by inositol 1,4,5-trisphosphate is blocked by the K(+)-channel blockers apamin and tetrapentylammonium ion, and a monoclonal antibody to a 63 kDa membrane protein: reversal of blockade by K+ ionophores nigericin and valinomycin and purification of the 63 kDa antibody-binding protein.</title>
        <authorList>
            <person name="O'Rourke F."/>
            <person name="Soons K."/>
            <person name="Flaumenhauft R."/>
            <person name="Watras J."/>
            <person name="Baio-Larue C."/>
            <person name="Matthews E."/>
            <person name="Feinstein M.B."/>
        </authorList>
    </citation>
    <scope>SUBCELLULAR LOCATION</scope>
</reference>
<reference evidence="10" key="7">
    <citation type="journal article" date="2003" name="Biochem. J.">
        <title>Antisense-mediated loss of calcium homoeostasis endoplasmic reticulum protein (CHERP; ERPROT213-21) impairs Ca2+ mobilization, nuclear factor of activated T-cells (NFAT) activation and cell proliferation in Jurkat T-lymphocytes.</title>
        <authorList>
            <person name="O'Rourke F.A."/>
            <person name="LaPlante J.M."/>
            <person name="Feinstein M.B."/>
        </authorList>
    </citation>
    <scope>FUNCTION</scope>
    <scope>SUBCELLULAR LOCATION</scope>
</reference>
<reference key="8">
    <citation type="journal article" date="2006" name="Cell">
        <title>Global, in vivo, and site-specific phosphorylation dynamics in signaling networks.</title>
        <authorList>
            <person name="Olsen J.V."/>
            <person name="Blagoev B."/>
            <person name="Gnad F."/>
            <person name="Macek B."/>
            <person name="Kumar C."/>
            <person name="Mortensen P."/>
            <person name="Mann M."/>
        </authorList>
    </citation>
    <scope>IDENTIFICATION BY MASS SPECTROMETRY [LARGE SCALE ANALYSIS]</scope>
    <source>
        <tissue>Cervix carcinoma</tissue>
    </source>
</reference>
<reference key="9">
    <citation type="journal article" date="2008" name="Proc. Natl. Acad. Sci. U.S.A.">
        <title>A quantitative atlas of mitotic phosphorylation.</title>
        <authorList>
            <person name="Dephoure N."/>
            <person name="Zhou C."/>
            <person name="Villen J."/>
            <person name="Beausoleil S.A."/>
            <person name="Bakalarski C.E."/>
            <person name="Elledge S.J."/>
            <person name="Gygi S.P."/>
        </authorList>
    </citation>
    <scope>PHOSPHORYLATION [LARGE SCALE ANALYSIS] AT SER-813; SER-815; SER-817; THR-819; SER-828 AND SER-904</scope>
    <scope>IDENTIFICATION BY MASS SPECTROMETRY [LARGE SCALE ANALYSIS]</scope>
    <source>
        <tissue>Cervix carcinoma</tissue>
    </source>
</reference>
<reference key="10">
    <citation type="journal article" date="2009" name="Anal. Chem.">
        <title>Lys-N and trypsin cover complementary parts of the phosphoproteome in a refined SCX-based approach.</title>
        <authorList>
            <person name="Gauci S."/>
            <person name="Helbig A.O."/>
            <person name="Slijper M."/>
            <person name="Krijgsveld J."/>
            <person name="Heck A.J."/>
            <person name="Mohammed S."/>
        </authorList>
    </citation>
    <scope>ACETYLATION [LARGE SCALE ANALYSIS] AT MET-1</scope>
    <scope>IDENTIFICATION BY MASS SPECTROMETRY [LARGE SCALE ANALYSIS]</scope>
</reference>
<reference key="11">
    <citation type="journal article" date="2009" name="Sci. Signal.">
        <title>Quantitative phosphoproteomic analysis of T cell receptor signaling reveals system-wide modulation of protein-protein interactions.</title>
        <authorList>
            <person name="Mayya V."/>
            <person name="Lundgren D.H."/>
            <person name="Hwang S.-I."/>
            <person name="Rezaul K."/>
            <person name="Wu L."/>
            <person name="Eng J.K."/>
            <person name="Rodionov V."/>
            <person name="Han D.K."/>
        </authorList>
    </citation>
    <scope>PHOSPHORYLATION [LARGE SCALE ANALYSIS] AT SER-815 AND SER-817</scope>
    <scope>IDENTIFICATION BY MASS SPECTROMETRY [LARGE SCALE ANALYSIS]</scope>
    <source>
        <tissue>Leukemic T-cell</tissue>
    </source>
</reference>
<reference key="12">
    <citation type="journal article" date="2009" name="Science">
        <title>Lysine acetylation targets protein complexes and co-regulates major cellular functions.</title>
        <authorList>
            <person name="Choudhary C."/>
            <person name="Kumar C."/>
            <person name="Gnad F."/>
            <person name="Nielsen M.L."/>
            <person name="Rehman M."/>
            <person name="Walther T.C."/>
            <person name="Olsen J.V."/>
            <person name="Mann M."/>
        </authorList>
    </citation>
    <scope>ACETYLATION [LARGE SCALE ANALYSIS] AT LYS-18 AND LYS-879</scope>
    <scope>IDENTIFICATION BY MASS SPECTROMETRY [LARGE SCALE ANALYSIS]</scope>
</reference>
<reference key="13">
    <citation type="journal article" date="2011" name="BMC Syst. Biol.">
        <title>Initial characterization of the human central proteome.</title>
        <authorList>
            <person name="Burkard T.R."/>
            <person name="Planyavsky M."/>
            <person name="Kaupe I."/>
            <person name="Breitwieser F.P."/>
            <person name="Buerckstuemmer T."/>
            <person name="Bennett K.L."/>
            <person name="Superti-Furga G."/>
            <person name="Colinge J."/>
        </authorList>
    </citation>
    <scope>IDENTIFICATION BY MASS SPECTROMETRY [LARGE SCALE ANALYSIS]</scope>
</reference>
<reference key="14">
    <citation type="journal article" date="2011" name="Sci. Signal.">
        <title>System-wide temporal characterization of the proteome and phosphoproteome of human embryonic stem cell differentiation.</title>
        <authorList>
            <person name="Rigbolt K.T."/>
            <person name="Prokhorova T.A."/>
            <person name="Akimov V."/>
            <person name="Henningsen J."/>
            <person name="Johansen P.T."/>
            <person name="Kratchmarova I."/>
            <person name="Kassem M."/>
            <person name="Mann M."/>
            <person name="Olsen J.V."/>
            <person name="Blagoev B."/>
        </authorList>
    </citation>
    <scope>PHOSPHORYLATION [LARGE SCALE ANALYSIS] AT SER-813; SER-815; SER-817 AND THR-819</scope>
    <scope>IDENTIFICATION BY MASS SPECTROMETRY [LARGE SCALE ANALYSIS]</scope>
</reference>
<reference key="15">
    <citation type="journal article" date="2012" name="Proc. Natl. Acad. Sci. U.S.A.">
        <title>N-terminal acetylome analyses and functional insights of the N-terminal acetyltransferase NatB.</title>
        <authorList>
            <person name="Van Damme P."/>
            <person name="Lasa M."/>
            <person name="Polevoda B."/>
            <person name="Gazquez C."/>
            <person name="Elosegui-Artola A."/>
            <person name="Kim D.S."/>
            <person name="De Juan-Pardo E."/>
            <person name="Demeyer K."/>
            <person name="Hole K."/>
            <person name="Larrea E."/>
            <person name="Timmerman E."/>
            <person name="Prieto J."/>
            <person name="Arnesen T."/>
            <person name="Sherman F."/>
            <person name="Gevaert K."/>
            <person name="Aldabe R."/>
        </authorList>
    </citation>
    <scope>ACETYLATION [LARGE SCALE ANALYSIS] AT MET-1</scope>
    <scope>IDENTIFICATION BY MASS SPECTROMETRY [LARGE SCALE ANALYSIS]</scope>
</reference>
<reference key="16">
    <citation type="journal article" date="2013" name="J. Proteome Res.">
        <title>Toward a comprehensive characterization of a human cancer cell phosphoproteome.</title>
        <authorList>
            <person name="Zhou H."/>
            <person name="Di Palma S."/>
            <person name="Preisinger C."/>
            <person name="Peng M."/>
            <person name="Polat A.N."/>
            <person name="Heck A.J."/>
            <person name="Mohammed S."/>
        </authorList>
    </citation>
    <scope>PHOSPHORYLATION [LARGE SCALE ANALYSIS] AT SER-813; SER-815; SER-817; THR-819; SER-855 AND SER-857</scope>
    <scope>IDENTIFICATION BY MASS SPECTROMETRY [LARGE SCALE ANALYSIS]</scope>
    <source>
        <tissue>Cervix carcinoma</tissue>
        <tissue>Erythroleukemia</tissue>
    </source>
</reference>
<reference key="17">
    <citation type="journal article" date="2017" name="Nat. Struct. Mol. Biol.">
        <title>Site-specific mapping of the human SUMO proteome reveals co-modification with phosphorylation.</title>
        <authorList>
            <person name="Hendriks I.A."/>
            <person name="Lyon D."/>
            <person name="Young C."/>
            <person name="Jensen L.J."/>
            <person name="Vertegaal A.C."/>
            <person name="Nielsen M.L."/>
        </authorList>
    </citation>
    <scope>SUMOYLATION [LARGE SCALE ANALYSIS] AT LYS-844 AND LYS-872</scope>
    <scope>IDENTIFICATION BY MASS SPECTROMETRY [LARGE SCALE ANALYSIS]</scope>
</reference>
<sequence length="916" mass="103702">MEMPLPPDDQELRNVIDKLAQFVARNGPEFEKMTMEKQKDNPKFSFLFGGEFYSYYKCKLALEQQQLICKQQTPELEPAATMPPLPQPPLAPAAPIPPAQGAPSMDELIQQSQWNLQQQEQHLLALRQEQVTAAVAHAVEQQMQKLLEETQLDMNEFDNLLQPIIDTCTKDAISAGKNWMFSNAKSPPHCELMAGHLRNRITADGAHFELRLHLIYLINDVLHHCQRKQARELLAALQKVVVPIYCTSFLAVEEDKQQKIARLLQLWEKNGYFDDSIIQQLQSPALGLGQYQATLINEYSSVVQPVQLAFQQQIQTLKTQHEEFVTSLAQQQQQQQQQQQQLQMPQMEAEVKATPPPPAPPPAPAPAPAIPPTTQPDDSKPPIQMPGSSEYEAPGGVQDPAAAGPRGPGPHDQIPPNKPPWFDQPHPVAPWGQQQPPEQPPYPHHQGGPPHCPPWNNSHEGMWGEQRGDPGWNGQRDAPWNNQPDAAWNSQFEGPWNSQHEQPPWGGGQREPPFRMQRPPHFRGPFPPHQQHPQFNQPPHPHNFNRFPPRFMQDDFPPRHPFERPPYPHRFDYPQGDFPAEMGPPHHHPGHRMPHPGINEHPPWAGPQHPDFGPPPHGFNGQPPHMRRQGPPHINHDDPSLVPNVPYFDLPAGLMAPLVKLEDHEYKPLDPKDIRLPPPMPPSERLLAAVEAFYSPPSHDRPRNSEGWEQNGLYEFFRAKMRARRRKGQEKRNSGPSRSRSRSKSRGRSSSRSNSRSSKSSGSYSRSRSRSCSRSYSRSRSRSRSRSRSSRSRSRSQSRSRSKSYSPGRRRRSRSRSPTPPSSAGLGSNSAPPIPDSRLGEENKGHQMLVKMGWSGSGGLGAKEQGIQDPIKGGDVRDKWDQYKGVGVALDDPYENYRRNKSYSFIARMKARDECK</sequence>
<proteinExistence type="evidence at protein level"/>
<name>CHERP_HUMAN</name>
<feature type="chain" id="PRO_0000299492" description="Calcium homeostasis endoplasmic reticulum protein">
    <location>
        <begin position="1"/>
        <end position="916"/>
    </location>
</feature>
<feature type="repeat" description="SURP motif" evidence="2">
    <location>
        <begin position="15"/>
        <end position="57"/>
    </location>
</feature>
<feature type="domain" description="CID" evidence="4">
    <location>
        <begin position="149"/>
        <end position="289"/>
    </location>
</feature>
<feature type="domain" description="G-patch" evidence="3">
    <location>
        <begin position="841"/>
        <end position="891"/>
    </location>
</feature>
<feature type="region of interest" description="Disordered" evidence="5">
    <location>
        <begin position="336"/>
        <end position="549"/>
    </location>
</feature>
<feature type="region of interest" description="Disordered" evidence="5">
    <location>
        <begin position="601"/>
        <end position="635"/>
    </location>
</feature>
<feature type="region of interest" description="Disordered" evidence="5">
    <location>
        <begin position="722"/>
        <end position="878"/>
    </location>
</feature>
<feature type="compositionally biased region" description="Pro residues" evidence="5">
    <location>
        <begin position="354"/>
        <end position="374"/>
    </location>
</feature>
<feature type="compositionally biased region" description="Polar residues" evidence="5">
    <location>
        <begin position="480"/>
        <end position="501"/>
    </location>
</feature>
<feature type="compositionally biased region" description="Pro residues" evidence="5">
    <location>
        <begin position="525"/>
        <end position="541"/>
    </location>
</feature>
<feature type="compositionally biased region" description="Basic residues" evidence="5">
    <location>
        <begin position="739"/>
        <end position="749"/>
    </location>
</feature>
<feature type="compositionally biased region" description="Low complexity" evidence="5">
    <location>
        <begin position="750"/>
        <end position="766"/>
    </location>
</feature>
<feature type="compositionally biased region" description="Basic residues" evidence="5">
    <location>
        <begin position="767"/>
        <end position="815"/>
    </location>
</feature>
<feature type="modified residue" description="N-acetylmethionine" evidence="17 21">
    <location>
        <position position="1"/>
    </location>
</feature>
<feature type="modified residue" description="N6-acetyllysine" evidence="18">
    <location>
        <position position="18"/>
    </location>
</feature>
<feature type="modified residue" description="Phosphotyrosine" evidence="1">
    <location>
        <position position="714"/>
    </location>
</feature>
<feature type="modified residue" description="Phosphoserine" evidence="16 20 22">
    <location>
        <position position="813"/>
    </location>
</feature>
<feature type="modified residue" description="Phosphoserine" evidence="16 19 20 22">
    <location>
        <position position="815"/>
    </location>
</feature>
<feature type="modified residue" description="Phosphoserine" evidence="16 19 20 22">
    <location>
        <position position="817"/>
    </location>
</feature>
<feature type="modified residue" description="Phosphothreonine" evidence="16 20 22">
    <location>
        <position position="819"/>
    </location>
</feature>
<feature type="modified residue" description="Phosphoserine" evidence="16">
    <location>
        <position position="828"/>
    </location>
</feature>
<feature type="modified residue" description="Phosphoserine" evidence="22">
    <location>
        <position position="855"/>
    </location>
</feature>
<feature type="modified residue" description="Phosphoserine" evidence="22">
    <location>
        <position position="857"/>
    </location>
</feature>
<feature type="modified residue" description="N6-acetyllysine" evidence="18">
    <location>
        <position position="879"/>
    </location>
</feature>
<feature type="modified residue" description="Phosphoserine" evidence="16">
    <location>
        <position position="904"/>
    </location>
</feature>
<feature type="cross-link" description="Glycyl lysine isopeptide (Lys-Gly) (interchain with G-Cter in SUMO2)" evidence="23">
    <location>
        <position position="844"/>
    </location>
</feature>
<feature type="cross-link" description="Glycyl lysine isopeptide (Lys-Gly) (interchain with G-Cter in SUMO2)" evidence="23">
    <location>
        <position position="872"/>
    </location>
</feature>
<feature type="sequence variant" id="VAR_034833" description="In dbSNP:rs1043448." evidence="6 9">
    <original>N</original>
    <variation>H</variation>
    <location>
        <position position="199"/>
    </location>
</feature>
<feature type="sequence conflict" description="In Ref. 4; CAA69591." evidence="10" ref="4">
    <original>A</original>
    <variation>D</variation>
    <location>
        <position position="99"/>
    </location>
</feature>
<feature type="sequence conflict" description="In Ref. 4; CAA69591." evidence="10" ref="4">
    <original>A</original>
    <variation>G</variation>
    <location>
        <position position="175"/>
    </location>
</feature>
<feature type="sequence conflict" description="In Ref. 4; CAA69591." evidence="10" ref="4">
    <original>K</original>
    <variation>T</variation>
    <location>
        <position position="185"/>
    </location>
</feature>
<feature type="sequence conflict" description="In Ref. 4; CAA69591." evidence="10" ref="4">
    <original>H</original>
    <variation>Y</variation>
    <location>
        <position position="189"/>
    </location>
</feature>
<feature type="sequence conflict" description="In Ref. 4; CAA69591." evidence="10" ref="4">
    <original>A</original>
    <variation>V</variation>
    <location>
        <position position="203"/>
    </location>
</feature>
<feature type="sequence conflict" description="In Ref. 4; CAA69591." evidence="10" ref="4">
    <original>K</original>
    <variation>N</variation>
    <location>
        <position position="418"/>
    </location>
</feature>
<feature type="sequence conflict" description="In Ref. 4; CAA69591." evidence="10" ref="4">
    <original>S</original>
    <variation>N</variation>
    <location>
        <position position="490"/>
    </location>
</feature>
<feature type="sequence conflict" description="In Ref. 1; AAN77183." evidence="10" ref="1">
    <original>Y</original>
    <variation>S</variation>
    <location>
        <position position="776"/>
    </location>
</feature>
<feature type="sequence conflict" description="In Ref. 1; AAN77183." evidence="10" ref="1">
    <original>R</original>
    <variation>C</variation>
    <location>
        <position position="778"/>
    </location>
</feature>
<accession>Q8IWX8</accession>
<accession>O00302</accession>
<accession>Q4G0Y5</accession>
<accession>Q8WU30</accession>
<accession>Q99492</accession>
<keyword id="KW-0007">Acetylation</keyword>
<keyword id="KW-0963">Cytoplasm</keyword>
<keyword id="KW-0256">Endoplasmic reticulum</keyword>
<keyword id="KW-1017">Isopeptide bond</keyword>
<keyword id="KW-0597">Phosphoprotein</keyword>
<keyword id="KW-1267">Proteomics identification</keyword>
<keyword id="KW-1185">Reference proteome</keyword>
<keyword id="KW-0832">Ubl conjugation</keyword>
<evidence type="ECO:0000250" key="1">
    <source>
        <dbReference type="UniProtKB" id="Q8CGZ0"/>
    </source>
</evidence>
<evidence type="ECO:0000255" key="2"/>
<evidence type="ECO:0000255" key="3">
    <source>
        <dbReference type="PROSITE-ProRule" id="PRU00092"/>
    </source>
</evidence>
<evidence type="ECO:0000255" key="4">
    <source>
        <dbReference type="PROSITE-ProRule" id="PRU00724"/>
    </source>
</evidence>
<evidence type="ECO:0000256" key="5">
    <source>
        <dbReference type="SAM" id="MobiDB-lite"/>
    </source>
</evidence>
<evidence type="ECO:0000269" key="6">
    <source>
    </source>
</evidence>
<evidence type="ECO:0000269" key="7">
    <source>
    </source>
</evidence>
<evidence type="ECO:0000269" key="8">
    <source>
    </source>
</evidence>
<evidence type="ECO:0000269" key="9">
    <source ref="1"/>
</evidence>
<evidence type="ECO:0000305" key="10"/>
<evidence type="ECO:0000312" key="11">
    <source>
        <dbReference type="EMBL" id="AAB53327.1"/>
    </source>
</evidence>
<evidence type="ECO:0000312" key="12">
    <source>
        <dbReference type="EMBL" id="AAH21294.1"/>
    </source>
</evidence>
<evidence type="ECO:0000312" key="13">
    <source>
        <dbReference type="EMBL" id="AAN77183.1"/>
    </source>
</evidence>
<evidence type="ECO:0000312" key="14">
    <source>
        <dbReference type="EMBL" id="CAA69591.1"/>
    </source>
</evidence>
<evidence type="ECO:0000312" key="15">
    <source>
        <dbReference type="HGNC" id="HGNC:16930"/>
    </source>
</evidence>
<evidence type="ECO:0007744" key="16">
    <source>
    </source>
</evidence>
<evidence type="ECO:0007744" key="17">
    <source>
    </source>
</evidence>
<evidence type="ECO:0007744" key="18">
    <source>
    </source>
</evidence>
<evidence type="ECO:0007744" key="19">
    <source>
    </source>
</evidence>
<evidence type="ECO:0007744" key="20">
    <source>
    </source>
</evidence>
<evidence type="ECO:0007744" key="21">
    <source>
    </source>
</evidence>
<evidence type="ECO:0007744" key="22">
    <source>
    </source>
</evidence>
<evidence type="ECO:0007744" key="23">
    <source>
    </source>
</evidence>
<organism>
    <name type="scientific">Homo sapiens</name>
    <name type="common">Human</name>
    <dbReference type="NCBI Taxonomy" id="9606"/>
    <lineage>
        <taxon>Eukaryota</taxon>
        <taxon>Metazoa</taxon>
        <taxon>Chordata</taxon>
        <taxon>Craniata</taxon>
        <taxon>Vertebrata</taxon>
        <taxon>Euteleostomi</taxon>
        <taxon>Mammalia</taxon>
        <taxon>Eutheria</taxon>
        <taxon>Euarchontoglires</taxon>
        <taxon>Primates</taxon>
        <taxon>Haplorrhini</taxon>
        <taxon>Catarrhini</taxon>
        <taxon>Hominidae</taxon>
        <taxon>Homo</taxon>
    </lineage>
</organism>
<gene>
    <name evidence="15" type="primary">CHERP</name>
    <name evidence="14" type="synonym">DAN26</name>
    <name evidence="13" type="synonym">SCAF6</name>
</gene>
<comment type="function">
    <text evidence="6 7">Involved in calcium homeostasis, growth and proliferation.</text>
</comment>
<comment type="interaction">
    <interactant intactId="EBI-2555370">
        <id>Q8IWX8</id>
    </interactant>
    <interactant intactId="EBI-10173507">
        <id>Q6UY14-3</id>
        <label>ADAMTSL4</label>
    </interactant>
    <organismsDiffer>false</organismsDiffer>
    <experiments>3</experiments>
</comment>
<comment type="interaction">
    <interactant intactId="EBI-2555370">
        <id>Q8IWX8</id>
    </interactant>
    <interactant intactId="EBI-946029">
        <id>Q6P1W5</id>
        <label>C1orf94</label>
    </interactant>
    <organismsDiffer>false</organismsDiffer>
    <experiments>3</experiments>
</comment>
<comment type="interaction">
    <interactant intactId="EBI-2555370">
        <id>Q8IWX8</id>
    </interactant>
    <interactant intactId="EBI-745579">
        <id>P49761</id>
        <label>CLK3</label>
    </interactant>
    <organismsDiffer>false</organismsDiffer>
    <experiments>3</experiments>
</comment>
<comment type="interaction">
    <interactant intactId="EBI-2555370">
        <id>Q8IWX8</id>
    </interactant>
    <interactant intactId="EBI-2511477">
        <id>Q14562</id>
        <label>DHX8</label>
    </interactant>
    <organismsDiffer>false</organismsDiffer>
    <experiments>2</experiments>
</comment>
<comment type="interaction">
    <interactant intactId="EBI-2555370">
        <id>Q8IWX8</id>
    </interactant>
    <interactant intactId="EBI-1754067">
        <id>Q14296</id>
        <label>FASTK</label>
    </interactant>
    <organismsDiffer>false</organismsDiffer>
    <experiments>3</experiments>
</comment>
<comment type="interaction">
    <interactant intactId="EBI-2555370">
        <id>Q8IWX8</id>
    </interactant>
    <interactant intactId="EBI-12297985">
        <id>Q5HY92</id>
        <label>FIGN</label>
    </interactant>
    <organismsDiffer>false</organismsDiffer>
    <experiments>3</experiments>
</comment>
<comment type="interaction">
    <interactant intactId="EBI-2555370">
        <id>Q8IWX8</id>
    </interactant>
    <interactant intactId="EBI-710176">
        <id>Q70Z53</id>
        <label>FRA10AC1</label>
    </interactant>
    <organismsDiffer>false</organismsDiffer>
    <experiments>2</experiments>
</comment>
<comment type="interaction">
    <interactant intactId="EBI-2555370">
        <id>Q8IWX8</id>
    </interactant>
    <interactant intactId="EBI-1052037">
        <id>Q8IUC1</id>
        <label>KRTAP11-1</label>
    </interactant>
    <organismsDiffer>false</organismsDiffer>
    <experiments>3</experiments>
</comment>
<comment type="interaction">
    <interactant intactId="EBI-2555370">
        <id>Q8IWX8</id>
    </interactant>
    <interactant intactId="EBI-9088686">
        <id>Q14847-2</id>
        <label>LASP1</label>
    </interactant>
    <organismsDiffer>false</organismsDiffer>
    <experiments>3</experiments>
</comment>
<comment type="interaction">
    <interactant intactId="EBI-2555370">
        <id>Q8IWX8</id>
    </interactant>
    <interactant intactId="EBI-473747">
        <id>Q9NQ29</id>
        <label>LUC7L</label>
    </interactant>
    <organismsDiffer>false</organismsDiffer>
    <experiments>2</experiments>
</comment>
<comment type="interaction">
    <interactant intactId="EBI-2555370">
        <id>Q8IWX8</id>
    </interactant>
    <interactant intactId="EBI-716006">
        <id>Q9Y5V3</id>
        <label>MAGED1</label>
    </interactant>
    <organismsDiffer>false</organismsDiffer>
    <experiments>3</experiments>
</comment>
<comment type="interaction">
    <interactant intactId="EBI-2555370">
        <id>Q8IWX8</id>
    </interactant>
    <interactant intactId="EBI-11963050">
        <id>O43251-10</id>
        <label>RBFOX2</label>
    </interactant>
    <organismsDiffer>false</organismsDiffer>
    <experiments>3</experiments>
</comment>
<comment type="interaction">
    <interactant intactId="EBI-2555370">
        <id>Q8IWX8</id>
    </interactant>
    <interactant intactId="EBI-3957636">
        <id>Q8IYX7</id>
        <label>SAXO1</label>
    </interactant>
    <organismsDiffer>false</organismsDiffer>
    <experiments>3</experiments>
</comment>
<comment type="interaction">
    <interactant intactId="EBI-2555370">
        <id>Q8IWX8</id>
    </interactant>
    <interactant intactId="EBI-744603">
        <id>Q15637</id>
        <label>SF1</label>
    </interactant>
    <organismsDiffer>false</organismsDiffer>
    <experiments>6</experiments>
</comment>
<comment type="interaction">
    <interactant intactId="EBI-2555370">
        <id>Q8IWX8</id>
    </interactant>
    <interactant intactId="EBI-2512550">
        <id>Q8WVK2</id>
        <label>SNRNP27</label>
    </interactant>
    <organismsDiffer>false</organismsDiffer>
    <experiments>2</experiments>
</comment>
<comment type="interaction">
    <interactant intactId="EBI-2555370">
        <id>Q8IWX8</id>
    </interactant>
    <interactant intactId="EBI-741237">
        <id>O60504</id>
        <label>SORBS3</label>
    </interactant>
    <organismsDiffer>false</organismsDiffer>
    <experiments>3</experiments>
</comment>
<comment type="interaction">
    <interactant intactId="EBI-2555370">
        <id>Q8IWX8</id>
    </interactant>
    <interactant intactId="EBI-12014388">
        <id>Q04726-4</id>
        <label>TLE3</label>
    </interactant>
    <organismsDiffer>false</organismsDiffer>
    <experiments>3</experiments>
</comment>
<comment type="interaction">
    <interactant intactId="EBI-2555370">
        <id>Q8IWX8</id>
    </interactant>
    <interactant intactId="EBI-742339">
        <id>P26368</id>
        <label>U2AF2</label>
    </interactant>
    <organismsDiffer>false</organismsDiffer>
    <experiments>3</experiments>
</comment>
<comment type="interaction">
    <interactant intactId="EBI-2555370">
        <id>Q8IWX8</id>
    </interactant>
    <interactant intactId="EBI-310697">
        <id>O15042</id>
        <label>U2SURP</label>
    </interactant>
    <organismsDiffer>false</organismsDiffer>
    <experiments>2</experiments>
</comment>
<comment type="interaction">
    <interactant intactId="EBI-2555370">
        <id>Q8IWX8</id>
    </interactant>
    <interactant intactId="EBI-11975223">
        <id>Q70EL1-9</id>
        <label>USP54</label>
    </interactant>
    <organismsDiffer>false</organismsDiffer>
    <experiments>3</experiments>
</comment>
<comment type="subcellular location">
    <subcellularLocation>
        <location evidence="6 7 8">Cytoplasm</location>
    </subcellularLocation>
    <subcellularLocation>
        <location evidence="6 7 8">Cytoplasm</location>
        <location evidence="6 7 8">Perinuclear region</location>
    </subcellularLocation>
    <subcellularLocation>
        <location evidence="6 7 8">Endoplasmic reticulum</location>
    </subcellularLocation>
    <text evidence="6 7 8">Distributed throughout the cytoplasm and also localizes to the perinuclear region of both human erythroleukemia (HEL) cells and Jurkat cells. Colocalizes with ITPR1.</text>
</comment>
<comment type="tissue specificity">
    <text evidence="6">Expressed in brain, placenta, lung, liver, kidney, pancreas, cardiac and skeletal muscle, and in cultured HEL and Dami cells.</text>
</comment>
<comment type="sequence caution" evidence="10">
    <conflict type="erroneous initiation">
        <sequence resource="EMBL-CDS" id="AAB53327"/>
    </conflict>
    <text>Truncated N-terminus.</text>
</comment>
<comment type="sequence caution" evidence="10">
    <conflict type="erroneous initiation">
        <sequence resource="EMBL-CDS" id="AAH21294"/>
    </conflict>
    <text>Truncated N-terminus.</text>
</comment>
<comment type="sequence caution" evidence="10">
    <conflict type="erroneous initiation">
        <sequence resource="EMBL-CDS" id="CAA69591"/>
    </conflict>
    <text>Extended N-terminus.</text>
</comment>
<comment type="sequence caution" evidence="10">
    <conflict type="frameshift">
        <sequence resource="EMBL-CDS" id="CAA69591"/>
    </conflict>
</comment>
<dbReference type="EMBL" id="AF536542">
    <property type="protein sequence ID" value="AAN77183.1"/>
    <property type="molecule type" value="mRNA"/>
</dbReference>
<dbReference type="EMBL" id="AC008764">
    <property type="status" value="NOT_ANNOTATED_CDS"/>
    <property type="molecule type" value="Genomic_DNA"/>
</dbReference>
<dbReference type="EMBL" id="BC021294">
    <property type="protein sequence ID" value="AAH21294.1"/>
    <property type="status" value="ALT_INIT"/>
    <property type="molecule type" value="mRNA"/>
</dbReference>
<dbReference type="EMBL" id="Y08265">
    <property type="protein sequence ID" value="CAA69591.1"/>
    <property type="status" value="ALT_SEQ"/>
    <property type="molecule type" value="mRNA"/>
</dbReference>
<dbReference type="EMBL" id="U94836">
    <property type="protein sequence ID" value="AAB53327.1"/>
    <property type="status" value="ALT_INIT"/>
    <property type="molecule type" value="mRNA"/>
</dbReference>
<dbReference type="CCDS" id="CCDS42518.1"/>
<dbReference type="RefSeq" id="NP_006378.3">
    <property type="nucleotide sequence ID" value="NM_006387.5"/>
</dbReference>
<dbReference type="SMR" id="Q8IWX8"/>
<dbReference type="BioGRID" id="115778">
    <property type="interactions" value="304"/>
</dbReference>
<dbReference type="CORUM" id="Q8IWX8"/>
<dbReference type="FunCoup" id="Q8IWX8">
    <property type="interactions" value="4428"/>
</dbReference>
<dbReference type="IntAct" id="Q8IWX8">
    <property type="interactions" value="167"/>
</dbReference>
<dbReference type="MINT" id="Q8IWX8"/>
<dbReference type="STRING" id="9606.ENSP00000439856"/>
<dbReference type="MoonDB" id="Q8IWX8">
    <property type="type" value="Predicted"/>
</dbReference>
<dbReference type="GlyGen" id="Q8IWX8">
    <property type="glycosylation" value="3 sites, 1 O-linked glycan (2 sites)"/>
</dbReference>
<dbReference type="iPTMnet" id="Q8IWX8"/>
<dbReference type="MetOSite" id="Q8IWX8"/>
<dbReference type="PhosphoSitePlus" id="Q8IWX8"/>
<dbReference type="SwissPalm" id="Q8IWX8"/>
<dbReference type="BioMuta" id="CHERP"/>
<dbReference type="DMDM" id="296439404"/>
<dbReference type="jPOST" id="Q8IWX8"/>
<dbReference type="MassIVE" id="Q8IWX8"/>
<dbReference type="PaxDb" id="9606-ENSP00000439856"/>
<dbReference type="PeptideAtlas" id="Q8IWX8"/>
<dbReference type="ProteomicsDB" id="70925"/>
<dbReference type="Pumba" id="Q8IWX8"/>
<dbReference type="Antibodypedia" id="27406">
    <property type="antibodies" value="227 antibodies from 30 providers"/>
</dbReference>
<dbReference type="DNASU" id="10523"/>
<dbReference type="Ensembl" id="ENST00000546361.7">
    <property type="protein sequence ID" value="ENSP00000439856.2"/>
    <property type="gene ID" value="ENSG00000085872.15"/>
</dbReference>
<dbReference type="GeneID" id="10523"/>
<dbReference type="KEGG" id="hsa:10523"/>
<dbReference type="MANE-Select" id="ENST00000546361.7">
    <property type="protein sequence ID" value="ENSP00000439856.2"/>
    <property type="RefSeq nucleotide sequence ID" value="NM_006387.6"/>
    <property type="RefSeq protein sequence ID" value="NP_006378.3"/>
</dbReference>
<dbReference type="UCSC" id="uc002nei.2">
    <property type="organism name" value="human"/>
</dbReference>
<dbReference type="AGR" id="HGNC:16930"/>
<dbReference type="CTD" id="10523"/>
<dbReference type="DisGeNET" id="10523"/>
<dbReference type="GeneCards" id="CHERP"/>
<dbReference type="HGNC" id="HGNC:16930">
    <property type="gene designation" value="CHERP"/>
</dbReference>
<dbReference type="HPA" id="ENSG00000085872">
    <property type="expression patterns" value="Low tissue specificity"/>
</dbReference>
<dbReference type="MalaCards" id="CHERP"/>
<dbReference type="MIM" id="618539">
    <property type="type" value="gene"/>
</dbReference>
<dbReference type="neXtProt" id="NX_Q8IWX8"/>
<dbReference type="OpenTargets" id="ENSG00000085872"/>
<dbReference type="PharmGKB" id="PA26459"/>
<dbReference type="VEuPathDB" id="HostDB:ENSG00000085872"/>
<dbReference type="eggNOG" id="KOG4368">
    <property type="taxonomic scope" value="Eukaryota"/>
</dbReference>
<dbReference type="GeneTree" id="ENSGT00730000111147"/>
<dbReference type="HOGENOM" id="CLU_009446_0_0_1"/>
<dbReference type="InParanoid" id="Q8IWX8"/>
<dbReference type="OMA" id="QNTHHDI"/>
<dbReference type="OrthoDB" id="21470at2759"/>
<dbReference type="PAN-GO" id="Q8IWX8">
    <property type="GO annotations" value="2 GO annotations based on evolutionary models"/>
</dbReference>
<dbReference type="PhylomeDB" id="Q8IWX8"/>
<dbReference type="TreeFam" id="TF318512"/>
<dbReference type="PathwayCommons" id="Q8IWX8"/>
<dbReference type="Reactome" id="R-HSA-72163">
    <property type="pathway name" value="mRNA Splicing - Major Pathway"/>
</dbReference>
<dbReference type="SignaLink" id="Q8IWX8"/>
<dbReference type="BioGRID-ORCS" id="10523">
    <property type="hits" value="783 hits in 1162 CRISPR screens"/>
</dbReference>
<dbReference type="ChiTaRS" id="CHERP">
    <property type="organism name" value="human"/>
</dbReference>
<dbReference type="GenomeRNAi" id="10523"/>
<dbReference type="Pharos" id="Q8IWX8">
    <property type="development level" value="Tbio"/>
</dbReference>
<dbReference type="PRO" id="PR:Q8IWX8"/>
<dbReference type="Proteomes" id="UP000005640">
    <property type="component" value="Chromosome 19"/>
</dbReference>
<dbReference type="RNAct" id="Q8IWX8">
    <property type="molecule type" value="protein"/>
</dbReference>
<dbReference type="Bgee" id="ENSG00000085872">
    <property type="expression patterns" value="Expressed in secondary oocyte and 200 other cell types or tissues"/>
</dbReference>
<dbReference type="ExpressionAtlas" id="Q8IWX8">
    <property type="expression patterns" value="baseline and differential"/>
</dbReference>
<dbReference type="GO" id="GO:0005737">
    <property type="term" value="C:cytoplasm"/>
    <property type="evidence" value="ECO:0000314"/>
    <property type="project" value="UniProtKB"/>
</dbReference>
<dbReference type="GO" id="GO:0016020">
    <property type="term" value="C:membrane"/>
    <property type="evidence" value="ECO:0007005"/>
    <property type="project" value="UniProtKB"/>
</dbReference>
<dbReference type="GO" id="GO:0005654">
    <property type="term" value="C:nucleoplasm"/>
    <property type="evidence" value="ECO:0000304"/>
    <property type="project" value="Reactome"/>
</dbReference>
<dbReference type="GO" id="GO:0048471">
    <property type="term" value="C:perinuclear region of cytoplasm"/>
    <property type="evidence" value="ECO:0000314"/>
    <property type="project" value="UniProtKB"/>
</dbReference>
<dbReference type="GO" id="GO:0033017">
    <property type="term" value="C:sarcoplasmic reticulum membrane"/>
    <property type="evidence" value="ECO:0000250"/>
    <property type="project" value="UniProtKB"/>
</dbReference>
<dbReference type="GO" id="GO:0003723">
    <property type="term" value="F:RNA binding"/>
    <property type="evidence" value="ECO:0007005"/>
    <property type="project" value="UniProtKB"/>
</dbReference>
<dbReference type="GO" id="GO:0044325">
    <property type="term" value="F:transmembrane transporter binding"/>
    <property type="evidence" value="ECO:0000353"/>
    <property type="project" value="UniProtKB"/>
</dbReference>
<dbReference type="GO" id="GO:0006874">
    <property type="term" value="P:intracellular calcium ion homeostasis"/>
    <property type="evidence" value="ECO:0000314"/>
    <property type="project" value="MGI"/>
</dbReference>
<dbReference type="GO" id="GO:0008285">
    <property type="term" value="P:negative regulation of cell population proliferation"/>
    <property type="evidence" value="ECO:0000314"/>
    <property type="project" value="MGI"/>
</dbReference>
<dbReference type="GO" id="GO:0007399">
    <property type="term" value="P:nervous system development"/>
    <property type="evidence" value="ECO:0000304"/>
    <property type="project" value="ProtInc"/>
</dbReference>
<dbReference type="GO" id="GO:0070886">
    <property type="term" value="P:positive regulation of calcineurin-NFAT signaling cascade"/>
    <property type="evidence" value="ECO:0000315"/>
    <property type="project" value="UniProtKB"/>
</dbReference>
<dbReference type="GO" id="GO:0051209">
    <property type="term" value="P:release of sequestered calcium ion into cytosol"/>
    <property type="evidence" value="ECO:0000315"/>
    <property type="project" value="UniProtKB"/>
</dbReference>
<dbReference type="GO" id="GO:0006396">
    <property type="term" value="P:RNA processing"/>
    <property type="evidence" value="ECO:0007669"/>
    <property type="project" value="InterPro"/>
</dbReference>
<dbReference type="FunFam" id="1.10.10.790:FF:000007">
    <property type="entry name" value="Calcium homeostasis endoplasmic reticulum protein"/>
    <property type="match status" value="1"/>
</dbReference>
<dbReference type="FunFam" id="1.25.40.90:FF:000024">
    <property type="entry name" value="Calcium homeostasis endoplasmic reticulum protein"/>
    <property type="match status" value="1"/>
</dbReference>
<dbReference type="Gene3D" id="1.25.40.90">
    <property type="match status" value="1"/>
</dbReference>
<dbReference type="Gene3D" id="1.10.10.790">
    <property type="entry name" value="Surp module"/>
    <property type="match status" value="1"/>
</dbReference>
<dbReference type="InterPro" id="IPR006569">
    <property type="entry name" value="CID_dom"/>
</dbReference>
<dbReference type="InterPro" id="IPR056721">
    <property type="entry name" value="DUF7819"/>
</dbReference>
<dbReference type="InterPro" id="IPR008942">
    <property type="entry name" value="ENTH_VHS"/>
</dbReference>
<dbReference type="InterPro" id="IPR000467">
    <property type="entry name" value="G_patch_dom"/>
</dbReference>
<dbReference type="InterPro" id="IPR000061">
    <property type="entry name" value="Surp"/>
</dbReference>
<dbReference type="InterPro" id="IPR035967">
    <property type="entry name" value="SWAP/Surp_sf"/>
</dbReference>
<dbReference type="PANTHER" id="PTHR12323:SF0">
    <property type="entry name" value="CALCIUM HOMEOSTASIS ENDOPLASMIC RETICULUM PROTEIN"/>
    <property type="match status" value="1"/>
</dbReference>
<dbReference type="PANTHER" id="PTHR12323">
    <property type="entry name" value="SR-RELATED CTD ASSOCIATED FACTOR 6"/>
    <property type="match status" value="1"/>
</dbReference>
<dbReference type="Pfam" id="PF04818">
    <property type="entry name" value="CID"/>
    <property type="match status" value="1"/>
</dbReference>
<dbReference type="Pfam" id="PF25127">
    <property type="entry name" value="DUF7819"/>
    <property type="match status" value="1"/>
</dbReference>
<dbReference type="Pfam" id="PF01585">
    <property type="entry name" value="G-patch"/>
    <property type="match status" value="1"/>
</dbReference>
<dbReference type="Pfam" id="PF01805">
    <property type="entry name" value="Surp"/>
    <property type="match status" value="1"/>
</dbReference>
<dbReference type="SMART" id="SM00443">
    <property type="entry name" value="G_patch"/>
    <property type="match status" value="1"/>
</dbReference>
<dbReference type="SMART" id="SM00648">
    <property type="entry name" value="SWAP"/>
    <property type="match status" value="1"/>
</dbReference>
<dbReference type="SUPFAM" id="SSF48464">
    <property type="entry name" value="ENTH/VHS domain"/>
    <property type="match status" value="1"/>
</dbReference>
<dbReference type="SUPFAM" id="SSF109905">
    <property type="entry name" value="Surp module (SWAP domain)"/>
    <property type="match status" value="1"/>
</dbReference>
<dbReference type="PROSITE" id="PS51391">
    <property type="entry name" value="CID"/>
    <property type="match status" value="1"/>
</dbReference>
<dbReference type="PROSITE" id="PS50174">
    <property type="entry name" value="G_PATCH"/>
    <property type="match status" value="1"/>
</dbReference>
<dbReference type="PROSITE" id="PS50128">
    <property type="entry name" value="SURP"/>
    <property type="match status" value="1"/>
</dbReference>
<protein>
    <recommendedName>
        <fullName>Calcium homeostasis endoplasmic reticulum protein</fullName>
    </recommendedName>
    <alternativeName>
        <fullName>ERPROT 213-21</fullName>
    </alternativeName>
    <alternativeName>
        <fullName>SR-related CTD-associated factor 6</fullName>
    </alternativeName>
</protein>